<accession>A8FKE8</accession>
<proteinExistence type="inferred from homology"/>
<feature type="chain" id="PRO_1000073571" description="Phosphoglucosamine mutase">
    <location>
        <begin position="1"/>
        <end position="445"/>
    </location>
</feature>
<feature type="active site" description="Phosphoserine intermediate" evidence="1">
    <location>
        <position position="99"/>
    </location>
</feature>
<feature type="binding site" description="via phosphate group" evidence="1">
    <location>
        <position position="99"/>
    </location>
    <ligand>
        <name>Mg(2+)</name>
        <dbReference type="ChEBI" id="CHEBI:18420"/>
    </ligand>
</feature>
<feature type="binding site" evidence="1">
    <location>
        <position position="242"/>
    </location>
    <ligand>
        <name>Mg(2+)</name>
        <dbReference type="ChEBI" id="CHEBI:18420"/>
    </ligand>
</feature>
<feature type="binding site" evidence="1">
    <location>
        <position position="244"/>
    </location>
    <ligand>
        <name>Mg(2+)</name>
        <dbReference type="ChEBI" id="CHEBI:18420"/>
    </ligand>
</feature>
<feature type="binding site" evidence="1">
    <location>
        <position position="246"/>
    </location>
    <ligand>
        <name>Mg(2+)</name>
        <dbReference type="ChEBI" id="CHEBI:18420"/>
    </ligand>
</feature>
<feature type="modified residue" description="Phosphoserine" evidence="1">
    <location>
        <position position="99"/>
    </location>
</feature>
<keyword id="KW-0413">Isomerase</keyword>
<keyword id="KW-0460">Magnesium</keyword>
<keyword id="KW-0479">Metal-binding</keyword>
<keyword id="KW-0597">Phosphoprotein</keyword>
<reference key="1">
    <citation type="journal article" date="2007" name="J. Bacteriol.">
        <title>The complete genome sequence of Campylobacter jejuni strain 81116 (NCTC11828).</title>
        <authorList>
            <person name="Pearson B.M."/>
            <person name="Gaskin D.J.H."/>
            <person name="Segers R.P.A.M."/>
            <person name="Wells J.M."/>
            <person name="Nuijten P.J.M."/>
            <person name="van Vliet A.H.M."/>
        </authorList>
    </citation>
    <scope>NUCLEOTIDE SEQUENCE [LARGE SCALE GENOMIC DNA]</scope>
    <source>
        <strain>81116 / NCTC 11828</strain>
    </source>
</reference>
<sequence length="445" mass="48798">MKLFGTDGVRGKAGEFLDSFLAMRLAMAAGIYFKDKSITNNILVGKDTRRSGYMIENAIVSGLTSIGYNVIQIGPMPTPAIAFLTEDMRCDAGIMISASHNPYYDNGIKFFDAHGNKLSEDIEKKIEEIYFDDKLIQASKVDMEKIGQAKRIDDVIGRYIVSIKNSFPKDLTLKSLRVVLDVAHGAAYKVAPTVFKELGAEVIVMSDKPNGLNINENCGALHPANLAAEVKRLRADVGFAFDGDADRLVVVDEKGEVANGDSLLGVLALYLKEQGKLQSSVVATIMSNGALKEFLNKHGIELDTCNVGDKYVLEKLKVNGGNFGGEQSGHIIFSDYAKTGDGLIAALQFSALMLSKKKSASSILGQVKPYPQLLTNLKIAEKKDLDKIKGLKELKKDLENKNINTLFRYSGTENLIRLLLEAKDIKLLEKEMKNVVEFFKKALNG</sequence>
<gene>
    <name evidence="1" type="primary">glmM</name>
    <name type="ordered locus">C8J_0336</name>
</gene>
<dbReference type="EC" id="5.4.2.10" evidence="1"/>
<dbReference type="EMBL" id="CP000814">
    <property type="protein sequence ID" value="ABV51935.1"/>
    <property type="molecule type" value="Genomic_DNA"/>
</dbReference>
<dbReference type="RefSeq" id="WP_002866639.1">
    <property type="nucleotide sequence ID" value="NC_009839.1"/>
</dbReference>
<dbReference type="SMR" id="A8FKE8"/>
<dbReference type="KEGG" id="cju:C8J_0336"/>
<dbReference type="HOGENOM" id="CLU_016950_7_0_7"/>
<dbReference type="GO" id="GO:0005829">
    <property type="term" value="C:cytosol"/>
    <property type="evidence" value="ECO:0007669"/>
    <property type="project" value="TreeGrafter"/>
</dbReference>
<dbReference type="GO" id="GO:0000287">
    <property type="term" value="F:magnesium ion binding"/>
    <property type="evidence" value="ECO:0007669"/>
    <property type="project" value="UniProtKB-UniRule"/>
</dbReference>
<dbReference type="GO" id="GO:0008966">
    <property type="term" value="F:phosphoglucosamine mutase activity"/>
    <property type="evidence" value="ECO:0007669"/>
    <property type="project" value="UniProtKB-UniRule"/>
</dbReference>
<dbReference type="GO" id="GO:0004615">
    <property type="term" value="F:phosphomannomutase activity"/>
    <property type="evidence" value="ECO:0007669"/>
    <property type="project" value="TreeGrafter"/>
</dbReference>
<dbReference type="GO" id="GO:0005975">
    <property type="term" value="P:carbohydrate metabolic process"/>
    <property type="evidence" value="ECO:0007669"/>
    <property type="project" value="InterPro"/>
</dbReference>
<dbReference type="GO" id="GO:0009252">
    <property type="term" value="P:peptidoglycan biosynthetic process"/>
    <property type="evidence" value="ECO:0007669"/>
    <property type="project" value="TreeGrafter"/>
</dbReference>
<dbReference type="GO" id="GO:0006048">
    <property type="term" value="P:UDP-N-acetylglucosamine biosynthetic process"/>
    <property type="evidence" value="ECO:0007669"/>
    <property type="project" value="TreeGrafter"/>
</dbReference>
<dbReference type="CDD" id="cd05802">
    <property type="entry name" value="GlmM"/>
    <property type="match status" value="1"/>
</dbReference>
<dbReference type="FunFam" id="3.40.120.10:FF:000001">
    <property type="entry name" value="Phosphoglucosamine mutase"/>
    <property type="match status" value="1"/>
</dbReference>
<dbReference type="FunFam" id="3.40.120.10:FF:000003">
    <property type="entry name" value="Phosphoglucosamine mutase"/>
    <property type="match status" value="1"/>
</dbReference>
<dbReference type="Gene3D" id="3.40.120.10">
    <property type="entry name" value="Alpha-D-Glucose-1,6-Bisphosphate, subunit A, domain 3"/>
    <property type="match status" value="3"/>
</dbReference>
<dbReference type="Gene3D" id="3.30.310.50">
    <property type="entry name" value="Alpha-D-phosphohexomutase, C-terminal domain"/>
    <property type="match status" value="1"/>
</dbReference>
<dbReference type="HAMAP" id="MF_01554_B">
    <property type="entry name" value="GlmM_B"/>
    <property type="match status" value="1"/>
</dbReference>
<dbReference type="InterPro" id="IPR005844">
    <property type="entry name" value="A-D-PHexomutase_a/b/a-I"/>
</dbReference>
<dbReference type="InterPro" id="IPR016055">
    <property type="entry name" value="A-D-PHexomutase_a/b/a-I/II/III"/>
</dbReference>
<dbReference type="InterPro" id="IPR005845">
    <property type="entry name" value="A-D-PHexomutase_a/b/a-II"/>
</dbReference>
<dbReference type="InterPro" id="IPR005846">
    <property type="entry name" value="A-D-PHexomutase_a/b/a-III"/>
</dbReference>
<dbReference type="InterPro" id="IPR005843">
    <property type="entry name" value="A-D-PHexomutase_C"/>
</dbReference>
<dbReference type="InterPro" id="IPR036900">
    <property type="entry name" value="A-D-PHexomutase_C_sf"/>
</dbReference>
<dbReference type="InterPro" id="IPR016066">
    <property type="entry name" value="A-D-PHexomutase_CS"/>
</dbReference>
<dbReference type="InterPro" id="IPR005841">
    <property type="entry name" value="Alpha-D-phosphohexomutase_SF"/>
</dbReference>
<dbReference type="InterPro" id="IPR006352">
    <property type="entry name" value="GlmM_bact"/>
</dbReference>
<dbReference type="InterPro" id="IPR050060">
    <property type="entry name" value="Phosphoglucosamine_mutase"/>
</dbReference>
<dbReference type="NCBIfam" id="TIGR01455">
    <property type="entry name" value="glmM"/>
    <property type="match status" value="1"/>
</dbReference>
<dbReference type="NCBIfam" id="NF008139">
    <property type="entry name" value="PRK10887.1"/>
    <property type="match status" value="1"/>
</dbReference>
<dbReference type="PANTHER" id="PTHR42946:SF1">
    <property type="entry name" value="PHOSPHOGLUCOMUTASE (ALPHA-D-GLUCOSE-1,6-BISPHOSPHATE-DEPENDENT)"/>
    <property type="match status" value="1"/>
</dbReference>
<dbReference type="PANTHER" id="PTHR42946">
    <property type="entry name" value="PHOSPHOHEXOSE MUTASE"/>
    <property type="match status" value="1"/>
</dbReference>
<dbReference type="Pfam" id="PF02878">
    <property type="entry name" value="PGM_PMM_I"/>
    <property type="match status" value="1"/>
</dbReference>
<dbReference type="Pfam" id="PF02879">
    <property type="entry name" value="PGM_PMM_II"/>
    <property type="match status" value="1"/>
</dbReference>
<dbReference type="Pfam" id="PF02880">
    <property type="entry name" value="PGM_PMM_III"/>
    <property type="match status" value="1"/>
</dbReference>
<dbReference type="Pfam" id="PF00408">
    <property type="entry name" value="PGM_PMM_IV"/>
    <property type="match status" value="1"/>
</dbReference>
<dbReference type="PRINTS" id="PR00509">
    <property type="entry name" value="PGMPMM"/>
</dbReference>
<dbReference type="SUPFAM" id="SSF55957">
    <property type="entry name" value="Phosphoglucomutase, C-terminal domain"/>
    <property type="match status" value="1"/>
</dbReference>
<dbReference type="SUPFAM" id="SSF53738">
    <property type="entry name" value="Phosphoglucomutase, first 3 domains"/>
    <property type="match status" value="3"/>
</dbReference>
<dbReference type="PROSITE" id="PS00710">
    <property type="entry name" value="PGM_PMM"/>
    <property type="match status" value="1"/>
</dbReference>
<organism>
    <name type="scientific">Campylobacter jejuni subsp. jejuni serotype O:6 (strain 81116 / NCTC 11828)</name>
    <dbReference type="NCBI Taxonomy" id="407148"/>
    <lineage>
        <taxon>Bacteria</taxon>
        <taxon>Pseudomonadati</taxon>
        <taxon>Campylobacterota</taxon>
        <taxon>Epsilonproteobacteria</taxon>
        <taxon>Campylobacterales</taxon>
        <taxon>Campylobacteraceae</taxon>
        <taxon>Campylobacter</taxon>
    </lineage>
</organism>
<evidence type="ECO:0000255" key="1">
    <source>
        <dbReference type="HAMAP-Rule" id="MF_01554"/>
    </source>
</evidence>
<name>GLMM_CAMJ8</name>
<comment type="function">
    <text evidence="1">Catalyzes the conversion of glucosamine-6-phosphate to glucosamine-1-phosphate.</text>
</comment>
<comment type="catalytic activity">
    <reaction evidence="1">
        <text>alpha-D-glucosamine 1-phosphate = D-glucosamine 6-phosphate</text>
        <dbReference type="Rhea" id="RHEA:23424"/>
        <dbReference type="ChEBI" id="CHEBI:58516"/>
        <dbReference type="ChEBI" id="CHEBI:58725"/>
        <dbReference type="EC" id="5.4.2.10"/>
    </reaction>
</comment>
<comment type="cofactor">
    <cofactor evidence="1">
        <name>Mg(2+)</name>
        <dbReference type="ChEBI" id="CHEBI:18420"/>
    </cofactor>
    <text evidence="1">Binds 1 Mg(2+) ion per subunit.</text>
</comment>
<comment type="PTM">
    <text evidence="1">Activated by phosphorylation.</text>
</comment>
<comment type="similarity">
    <text evidence="1">Belongs to the phosphohexose mutase family.</text>
</comment>
<protein>
    <recommendedName>
        <fullName evidence="1">Phosphoglucosamine mutase</fullName>
        <ecNumber evidence="1">5.4.2.10</ecNumber>
    </recommendedName>
</protein>